<sequence length="301" mass="32142">MGNSTESVITDYLVRIITREGNIRALACVTTNLVGDACRRHGTLPTASAALGRALTGGVLMGALLKTGQRIALTFEGNGPLKKIIVEADANGAVRGLVRNPAVSLLRDDGKLDVAGALGKAGFLTVSRDLGLKEPYTGTVMLYTSEIAEDLAWYLTESEQIPSAVGLGVYVEQDGSVAAAGGFLIQALPPGDDQLIDRIMERIASMPPVTEMLRAGATPEGLLEYLFDGIPFDILEKRATALVCSCSRERIERVLLSLGSDELSSLIHDQGEASVGCEFCGEHYNFTREELERLRDSLTAV</sequence>
<dbReference type="EMBL" id="AE017180">
    <property type="protein sequence ID" value="AAR36738.1"/>
    <property type="molecule type" value="Genomic_DNA"/>
</dbReference>
<dbReference type="RefSeq" id="NP_954388.1">
    <property type="nucleotide sequence ID" value="NC_002939.5"/>
</dbReference>
<dbReference type="RefSeq" id="WP_010943960.1">
    <property type="nucleotide sequence ID" value="NC_002939.5"/>
</dbReference>
<dbReference type="SMR" id="Q747B9"/>
<dbReference type="FunCoup" id="Q747B9">
    <property type="interactions" value="291"/>
</dbReference>
<dbReference type="STRING" id="243231.GSU3348"/>
<dbReference type="EnsemblBacteria" id="AAR36738">
    <property type="protein sequence ID" value="AAR36738"/>
    <property type="gene ID" value="GSU3348"/>
</dbReference>
<dbReference type="KEGG" id="gsu:GSU3348"/>
<dbReference type="PATRIC" id="fig|243231.5.peg.3370"/>
<dbReference type="eggNOG" id="COG1281">
    <property type="taxonomic scope" value="Bacteria"/>
</dbReference>
<dbReference type="HOGENOM" id="CLU_054493_1_0_7"/>
<dbReference type="InParanoid" id="Q747B9"/>
<dbReference type="OrthoDB" id="9793753at2"/>
<dbReference type="Proteomes" id="UP000000577">
    <property type="component" value="Chromosome"/>
</dbReference>
<dbReference type="GO" id="GO:0005737">
    <property type="term" value="C:cytoplasm"/>
    <property type="evidence" value="ECO:0000318"/>
    <property type="project" value="GO_Central"/>
</dbReference>
<dbReference type="GO" id="GO:0044183">
    <property type="term" value="F:protein folding chaperone"/>
    <property type="evidence" value="ECO:0000318"/>
    <property type="project" value="GO_Central"/>
</dbReference>
<dbReference type="GO" id="GO:0051082">
    <property type="term" value="F:unfolded protein binding"/>
    <property type="evidence" value="ECO:0007669"/>
    <property type="project" value="UniProtKB-UniRule"/>
</dbReference>
<dbReference type="GO" id="GO:0042026">
    <property type="term" value="P:protein refolding"/>
    <property type="evidence" value="ECO:0000318"/>
    <property type="project" value="GO_Central"/>
</dbReference>
<dbReference type="CDD" id="cd00498">
    <property type="entry name" value="Hsp33"/>
    <property type="match status" value="1"/>
</dbReference>
<dbReference type="Gene3D" id="3.55.30.10">
    <property type="entry name" value="Hsp33 domain"/>
    <property type="match status" value="1"/>
</dbReference>
<dbReference type="Gene3D" id="3.90.1280.10">
    <property type="entry name" value="HSP33 redox switch-like"/>
    <property type="match status" value="1"/>
</dbReference>
<dbReference type="HAMAP" id="MF_00117">
    <property type="entry name" value="HslO"/>
    <property type="match status" value="1"/>
</dbReference>
<dbReference type="InterPro" id="IPR000397">
    <property type="entry name" value="Heat_shock_Hsp33"/>
</dbReference>
<dbReference type="InterPro" id="IPR016154">
    <property type="entry name" value="Heat_shock_Hsp33_C"/>
</dbReference>
<dbReference type="InterPro" id="IPR016153">
    <property type="entry name" value="Heat_shock_Hsp33_N"/>
</dbReference>
<dbReference type="NCBIfam" id="NF001033">
    <property type="entry name" value="PRK00114.1"/>
    <property type="match status" value="1"/>
</dbReference>
<dbReference type="PANTHER" id="PTHR30111">
    <property type="entry name" value="33 KDA CHAPERONIN"/>
    <property type="match status" value="1"/>
</dbReference>
<dbReference type="PANTHER" id="PTHR30111:SF1">
    <property type="entry name" value="33 KDA CHAPERONIN"/>
    <property type="match status" value="1"/>
</dbReference>
<dbReference type="Pfam" id="PF01430">
    <property type="entry name" value="HSP33"/>
    <property type="match status" value="1"/>
</dbReference>
<dbReference type="PIRSF" id="PIRSF005261">
    <property type="entry name" value="Heat_shock_Hsp33"/>
    <property type="match status" value="1"/>
</dbReference>
<dbReference type="SUPFAM" id="SSF64397">
    <property type="entry name" value="Hsp33 domain"/>
    <property type="match status" value="1"/>
</dbReference>
<dbReference type="SUPFAM" id="SSF118352">
    <property type="entry name" value="HSP33 redox switch-like"/>
    <property type="match status" value="1"/>
</dbReference>
<protein>
    <recommendedName>
        <fullName evidence="1">33 kDa chaperonin</fullName>
    </recommendedName>
    <alternativeName>
        <fullName evidence="1">Heat shock protein 33 homolog</fullName>
        <shortName evidence="1">HSP33</shortName>
    </alternativeName>
</protein>
<name>HSLO_GEOSL</name>
<accession>Q747B9</accession>
<organism>
    <name type="scientific">Geobacter sulfurreducens (strain ATCC 51573 / DSM 12127 / PCA)</name>
    <dbReference type="NCBI Taxonomy" id="243231"/>
    <lineage>
        <taxon>Bacteria</taxon>
        <taxon>Pseudomonadati</taxon>
        <taxon>Thermodesulfobacteriota</taxon>
        <taxon>Desulfuromonadia</taxon>
        <taxon>Geobacterales</taxon>
        <taxon>Geobacteraceae</taxon>
        <taxon>Geobacter</taxon>
    </lineage>
</organism>
<gene>
    <name evidence="1" type="primary">hslO</name>
    <name type="ordered locus">GSU3348</name>
</gene>
<comment type="function">
    <text evidence="1">Redox regulated molecular chaperone. Protects both thermally unfolding and oxidatively damaged proteins from irreversible aggregation. Plays an important role in the bacterial defense system toward oxidative stress.</text>
</comment>
<comment type="subcellular location">
    <subcellularLocation>
        <location evidence="1">Cytoplasm</location>
    </subcellularLocation>
</comment>
<comment type="PTM">
    <text evidence="1">Under oxidizing conditions two disulfide bonds are formed involving the reactive cysteines. Under reducing conditions zinc is bound to the reactive cysteines and the protein is inactive.</text>
</comment>
<comment type="similarity">
    <text evidence="1">Belongs to the HSP33 family.</text>
</comment>
<feature type="chain" id="PRO_0000238069" description="33 kDa chaperonin">
    <location>
        <begin position="1"/>
        <end position="301"/>
    </location>
</feature>
<feature type="disulfide bond" description="Redox-active" evidence="1">
    <location>
        <begin position="244"/>
        <end position="246"/>
    </location>
</feature>
<feature type="disulfide bond" description="Redox-active" evidence="1">
    <location>
        <begin position="277"/>
        <end position="280"/>
    </location>
</feature>
<evidence type="ECO:0000255" key="1">
    <source>
        <dbReference type="HAMAP-Rule" id="MF_00117"/>
    </source>
</evidence>
<proteinExistence type="inferred from homology"/>
<keyword id="KW-0143">Chaperone</keyword>
<keyword id="KW-0963">Cytoplasm</keyword>
<keyword id="KW-1015">Disulfide bond</keyword>
<keyword id="KW-0676">Redox-active center</keyword>
<keyword id="KW-1185">Reference proteome</keyword>
<keyword id="KW-0862">Zinc</keyword>
<reference key="1">
    <citation type="journal article" date="2003" name="Science">
        <title>Genome of Geobacter sulfurreducens: metal reduction in subsurface environments.</title>
        <authorList>
            <person name="Methe B.A."/>
            <person name="Nelson K.E."/>
            <person name="Eisen J.A."/>
            <person name="Paulsen I.T."/>
            <person name="Nelson W.C."/>
            <person name="Heidelberg J.F."/>
            <person name="Wu D."/>
            <person name="Wu M."/>
            <person name="Ward N.L."/>
            <person name="Beanan M.J."/>
            <person name="Dodson R.J."/>
            <person name="Madupu R."/>
            <person name="Brinkac L.M."/>
            <person name="Daugherty S.C."/>
            <person name="DeBoy R.T."/>
            <person name="Durkin A.S."/>
            <person name="Gwinn M.L."/>
            <person name="Kolonay J.F."/>
            <person name="Sullivan S.A."/>
            <person name="Haft D.H."/>
            <person name="Selengut J."/>
            <person name="Davidsen T.M."/>
            <person name="Zafar N."/>
            <person name="White O."/>
            <person name="Tran B."/>
            <person name="Romero C."/>
            <person name="Forberger H.A."/>
            <person name="Weidman J.F."/>
            <person name="Khouri H.M."/>
            <person name="Feldblyum T.V."/>
            <person name="Utterback T.R."/>
            <person name="Van Aken S.E."/>
            <person name="Lovley D.R."/>
            <person name="Fraser C.M."/>
        </authorList>
    </citation>
    <scope>NUCLEOTIDE SEQUENCE [LARGE SCALE GENOMIC DNA]</scope>
    <source>
        <strain>ATCC 51573 / DSM 12127 / PCA</strain>
    </source>
</reference>